<reference key="1">
    <citation type="journal article" date="1997" name="Science">
        <title>The complete genome sequence of Escherichia coli K-12.</title>
        <authorList>
            <person name="Blattner F.R."/>
            <person name="Plunkett G. III"/>
            <person name="Bloch C.A."/>
            <person name="Perna N.T."/>
            <person name="Burland V."/>
            <person name="Riley M."/>
            <person name="Collado-Vides J."/>
            <person name="Glasner J.D."/>
            <person name="Rode C.K."/>
            <person name="Mayhew G.F."/>
            <person name="Gregor J."/>
            <person name="Davis N.W."/>
            <person name="Kirkpatrick H.A."/>
            <person name="Goeden M.A."/>
            <person name="Rose D.J."/>
            <person name="Mau B."/>
            <person name="Shao Y."/>
        </authorList>
    </citation>
    <scope>NUCLEOTIDE SEQUENCE [LARGE SCALE GENOMIC DNA]</scope>
    <source>
        <strain>K12 / MG1655 / ATCC 47076</strain>
    </source>
</reference>
<reference key="2">
    <citation type="journal article" date="2006" name="Mol. Syst. Biol.">
        <title>Highly accurate genome sequences of Escherichia coli K-12 strains MG1655 and W3110.</title>
        <authorList>
            <person name="Hayashi K."/>
            <person name="Morooka N."/>
            <person name="Yamamoto Y."/>
            <person name="Fujita K."/>
            <person name="Isono K."/>
            <person name="Choi S."/>
            <person name="Ohtsubo E."/>
            <person name="Baba T."/>
            <person name="Wanner B.L."/>
            <person name="Mori H."/>
            <person name="Horiuchi T."/>
        </authorList>
    </citation>
    <scope>NUCLEOTIDE SEQUENCE [LARGE SCALE GENOMIC DNA]</scope>
    <source>
        <strain>K12 / W3110 / ATCC 27325 / DSM 5911</strain>
    </source>
</reference>
<reference key="3">
    <citation type="journal article" date="2017" name="PLoS Genet.">
        <title>NlpD links cell wall remodeling and outer membrane invagination during cytokinesis in Escherichia coli.</title>
        <authorList>
            <person name="Tsang M.J."/>
            <person name="Yakhnina A.A."/>
            <person name="Bernhardt T.G."/>
        </authorList>
    </citation>
    <scope>SUBCELLULAR LOCATION</scope>
    <scope>DISRUPTION PHENOTYPE</scope>
    <scope>PRELIMINARY FUNCTION</scope>
    <source>
        <strain>K12 / MG1655 / ATCC 47076</strain>
    </source>
</reference>
<reference key="4">
    <citation type="journal article" date="2021" name="Elife">
        <title>Lipoprotein DolP supports proper folding of BamA in the bacterial outer membrane promoting fitness upon envelope stress.</title>
        <authorList>
            <person name="Ranava D."/>
            <person name="Yang Y."/>
            <person name="Orenday-Tapia L."/>
            <person name="Rousset F."/>
            <person name="Turlan C."/>
            <person name="Morales V."/>
            <person name="Cui L."/>
            <person name="Moulin C."/>
            <person name="Froment C."/>
            <person name="Munoz G."/>
            <person name="Rech J."/>
            <person name="Marcoux J."/>
            <person name="Caumont-Sarcos A."/>
            <person name="Albenne C."/>
            <person name="Bikard D."/>
            <person name="Ieva R."/>
        </authorList>
    </citation>
    <scope>FUNCTION</scope>
    <scope>INTERACTION WITH BAMA</scope>
    <scope>SUBCELLULAR LOCATION</scope>
    <scope>DOMAIN</scope>
    <scope>DISRUPTION PHENOTYPE</scope>
    <source>
        <strain>K12</strain>
    </source>
</reference>
<reference key="5">
    <citation type="journal article" date="2022" name="Microbiology">
        <title>The lipoprotein DolP affects cell separation in Escherichia coli, but not as an upstream regulator of NlpD.</title>
        <authorList>
            <person name="Boelter G."/>
            <person name="Bryant J.A."/>
            <person name="Doherty H."/>
            <person name="Wotherspoon P."/>
            <person name="Alodaini D."/>
            <person name="Ma X."/>
            <person name="Alao M.B."/>
            <person name="Moynihan P.J."/>
            <person name="Moradigaravand D."/>
            <person name="Glinkowska M."/>
            <person name="Knowles T.J."/>
            <person name="Henderson I.R."/>
            <person name="Banzhaf M."/>
        </authorList>
    </citation>
    <scope>FUNCTION</scope>
    <scope>INTERACTION WITH AMIC AND AMIA</scope>
    <scope>DISRUPTION PHENOTYPE</scope>
    <source>
        <strain>K12 / BW25113</strain>
    </source>
</reference>
<reference evidence="9" key="6">
    <citation type="journal article" date="2020" name="Elife">
        <title>Structure of dual BON-domain protein DolP identifies phospholipid binding as a new mechanism for protein localisation.</title>
        <authorList>
            <person name="Bryant J.A."/>
            <person name="Morris F.C."/>
            <person name="Knowles T.J."/>
            <person name="Maderbocus R."/>
            <person name="Heinz E."/>
            <person name="Boelter G."/>
            <person name="Alodaini D."/>
            <person name="Colyer A."/>
            <person name="Wotherspoon P.J."/>
            <person name="Staunton K.A."/>
            <person name="Jeeves M."/>
            <person name="Browning D.F."/>
            <person name="Sevastsyanovich Y.R."/>
            <person name="Wells T.J."/>
            <person name="Rossiter A.E."/>
            <person name="Bavro V.N."/>
            <person name="Sridhar P."/>
            <person name="Ward D.G."/>
            <person name="Chong Z.S."/>
            <person name="Goodall E.C."/>
            <person name="Icke C."/>
            <person name="Teo A.C."/>
            <person name="Chng S.S."/>
            <person name="Roper D.I."/>
            <person name="Lithgow T."/>
            <person name="Cunningham A.F."/>
            <person name="Banzhaf M."/>
            <person name="Overduin M."/>
            <person name="Henderson I.R."/>
        </authorList>
    </citation>
    <scope>STRUCTURE BY NMR OF 20-191</scope>
    <scope>FUNCTION</scope>
    <scope>SUBCELLULAR LOCATION</scope>
    <scope>DOMAIN</scope>
    <scope>DISRUPTION PHENOTYPE</scope>
    <scope>MUTAGENESIS OF CYS-19; TYR-75; GLY-83; TRP-127; LEU-137 AND GLY-160</scope>
    <source>
        <strain>K12 / BW25113</strain>
    </source>
</reference>
<protein>
    <recommendedName>
        <fullName evidence="8">Outer membrane lipoprotein DolP</fullName>
    </recommendedName>
</protein>
<comment type="function">
    <text evidence="3 4 5 6">Plays an important role in maintaining outer membrane integrity (PubMed:33315009, PubMed:33847565). Supports proper folding and function of BamA under envelope stress conditions (PubMed:33847565). Binds specifically to anionic phospholipids via the BON 2 domain (PubMed:33315009). This interaction is essential for function and guides the protein to the cell division site (PubMed:33315009). It was reported that DolP is a potential upstream regulator of the amidase activator NlpD (PubMed:28708841). However, later studies suggest that DolP affects cell division and may impact daughter cell separation, but likely not as a regulator of NlpD (PubMed:35604759).</text>
</comment>
<comment type="subunit">
    <text evidence="5 6">Interacts with the BAM complex by associating with outer membrane-assembled BamA (PubMed:33847565). Interacts weakly with the amidase AmiC and potentially with AmiA, but does not interact with NlpD (PubMed:35604759).</text>
</comment>
<comment type="subcellular location">
    <subcellularLocation>
        <location evidence="3 4">Cell outer membrane</location>
        <topology evidence="2 4">Lipid-anchor</topology>
        <orientation evidence="4">Periplasmic side</orientation>
    </subcellularLocation>
    <text evidence="3 4 5">Localizes to the cell division site (PubMed:28708841, PubMed:33315009). Localization to the division site is dependent upon interaction with anionic phospholipids (PubMed:33315009). Upon envelope stress, loses its association with the mid-cell (PubMed:33847565).</text>
</comment>
<comment type="domain">
    <text evidence="4 5">Composed of two BON domains that form an interconnected opposing pair (PubMed:33315009). The N-terminal BON domain interacts with BamA (PubMed:33847565). The C-terminal BON domain binds anionic phospholipids through an extensive membrane:protein interface (PubMed:33315009).</text>
</comment>
<comment type="disruption phenotype">
    <text evidence="3 4 5 6">Mutants grow and divide normally on LB medium (PubMed:28708841, PubMed:33315009, PubMed:33847565, PubMed:35604759). However, mutants show severe growth defects under cell envelope stresses (PubMed:35604759). Loss of the gene increases membrane fluidity (PubMed:33315009). Disruption results in susceptibility to vancomycin, SDS, cholate and deoxycholate (PubMed:33315009, PubMed:33847565). EnvC-dolP, amiA-dolP, ftsE-dolP and ftsX-dolP double mutants show a chaining phenotype (PubMed:28708841, PubMed:35604759).</text>
</comment>
<comment type="similarity">
    <text evidence="8">Belongs to the lipoprotein DolP family.</text>
</comment>
<evidence type="ECO:0000255" key="1">
    <source>
        <dbReference type="PROSITE-ProRule" id="PRU00229"/>
    </source>
</evidence>
<evidence type="ECO:0000255" key="2">
    <source>
        <dbReference type="PROSITE-ProRule" id="PRU00303"/>
    </source>
</evidence>
<evidence type="ECO:0000269" key="3">
    <source>
    </source>
</evidence>
<evidence type="ECO:0000269" key="4">
    <source>
    </source>
</evidence>
<evidence type="ECO:0000269" key="5">
    <source>
    </source>
</evidence>
<evidence type="ECO:0000269" key="6">
    <source>
    </source>
</evidence>
<evidence type="ECO:0000303" key="7">
    <source>
    </source>
</evidence>
<evidence type="ECO:0000305" key="8"/>
<evidence type="ECO:0007744" key="9">
    <source>
        <dbReference type="PDB" id="7A2D"/>
    </source>
</evidence>
<evidence type="ECO:0007829" key="10">
    <source>
        <dbReference type="PDB" id="7A2D"/>
    </source>
</evidence>
<accession>P64596</accession>
<accession>P45467</accession>
<accession>Q2M960</accession>
<feature type="signal peptide" evidence="2">
    <location>
        <begin position="1"/>
        <end position="18"/>
    </location>
</feature>
<feature type="chain" id="PRO_0000013909" description="Outer membrane lipoprotein DolP">
    <location>
        <begin position="19"/>
        <end position="191"/>
    </location>
</feature>
<feature type="domain" description="BON 1" evidence="1">
    <location>
        <begin position="46"/>
        <end position="115"/>
    </location>
</feature>
<feature type="domain" description="BON 2" evidence="1">
    <location>
        <begin position="124"/>
        <end position="191"/>
    </location>
</feature>
<feature type="lipid moiety-binding region" description="N-palmitoyl cysteine" evidence="2">
    <location>
        <position position="19"/>
    </location>
</feature>
<feature type="lipid moiety-binding region" description="S-diacylglycerol cysteine" evidence="2">
    <location>
        <position position="19"/>
    </location>
</feature>
<feature type="mutagenesis site" description="Cannot localize to the outer membrane." evidence="4">
    <original>C</original>
    <variation>A</variation>
    <location>
        <position position="19"/>
    </location>
</feature>
<feature type="mutagenesis site" description="Loss of activity. Mutant cannot grow on 4.8% SDS." evidence="4">
    <original>Y</original>
    <variation>A</variation>
    <location>
        <position position="75"/>
    </location>
</feature>
<feature type="mutagenesis site" description="Loss of activity. Mutant cannot grow on 4.8% SDS; when associated with V-160." evidence="4">
    <original>G</original>
    <variation>V</variation>
    <location>
        <position position="83"/>
    </location>
</feature>
<feature type="mutagenesis site" description="Loss of activity. Abolishes binding to phosphatidylglycerol micelles and localization to the division site." evidence="4">
    <original>W</original>
    <variation>E</variation>
    <location>
        <position position="127"/>
    </location>
</feature>
<feature type="mutagenesis site" description="Loss of activity." evidence="4">
    <original>L</original>
    <variation>E</variation>
    <location>
        <position position="137"/>
    </location>
</feature>
<feature type="mutagenesis site" description="Loss of activity. Mutant cannot grow on 4.8% SDS; when associated with V-83." evidence="4">
    <original>G</original>
    <variation>V</variation>
    <location>
        <position position="160"/>
    </location>
</feature>
<feature type="helix" evidence="10">
    <location>
        <begin position="47"/>
        <end position="60"/>
    </location>
</feature>
<feature type="turn" evidence="10">
    <location>
        <begin position="62"/>
        <end position="67"/>
    </location>
</feature>
<feature type="strand" evidence="10">
    <location>
        <begin position="69"/>
        <end position="75"/>
    </location>
</feature>
<feature type="strand" evidence="10">
    <location>
        <begin position="78"/>
        <end position="84"/>
    </location>
</feature>
<feature type="helix" evidence="10">
    <location>
        <begin position="88"/>
        <end position="99"/>
    </location>
</feature>
<feature type="strand" evidence="10">
    <location>
        <begin position="100"/>
        <end position="103"/>
    </location>
</feature>
<feature type="strand" evidence="10">
    <location>
        <begin position="107"/>
        <end position="112"/>
    </location>
</feature>
<feature type="helix" evidence="10">
    <location>
        <begin position="119"/>
        <end position="137"/>
    </location>
</feature>
<feature type="strand" evidence="10">
    <location>
        <begin position="140"/>
        <end position="142"/>
    </location>
</feature>
<feature type="turn" evidence="10">
    <location>
        <begin position="144"/>
        <end position="146"/>
    </location>
</feature>
<feature type="strand" evidence="10">
    <location>
        <begin position="147"/>
        <end position="152"/>
    </location>
</feature>
<feature type="strand" evidence="10">
    <location>
        <begin position="155"/>
        <end position="162"/>
    </location>
</feature>
<feature type="helix" evidence="10">
    <location>
        <begin position="164"/>
        <end position="176"/>
    </location>
</feature>
<feature type="strand" evidence="10">
    <location>
        <begin position="181"/>
        <end position="189"/>
    </location>
</feature>
<keyword id="KW-0002">3D-structure</keyword>
<keyword id="KW-0998">Cell outer membrane</keyword>
<keyword id="KW-0449">Lipoprotein</keyword>
<keyword id="KW-0472">Membrane</keyword>
<keyword id="KW-0564">Palmitate</keyword>
<keyword id="KW-1185">Reference proteome</keyword>
<keyword id="KW-0677">Repeat</keyword>
<keyword id="KW-0732">Signal</keyword>
<proteinExistence type="evidence at protein level"/>
<gene>
    <name evidence="7" type="primary">dolP</name>
    <name type="synonym">yraP</name>
    <name type="ordered locus">b3150</name>
    <name type="ordered locus">JW3119</name>
</gene>
<sequence length="191" mass="20028">MKALSPIAVLISALLLQGCVAAAVVGTAAVGTKAATDPRSVGTQVDDGTLEVRVNSALSKDEQIKKEARINVTAYQGKVLLVGQSPNAELSARAKQIAMGVDGANEVYNEIRQGQPIGLGEASNDTWITTKVRSQLLTSDLVKSSNVKVTTENGEVFLMGLVTEREAKAAADIASRVSGVKRVTTAFTFIK</sequence>
<dbReference type="EMBL" id="U18997">
    <property type="protein sequence ID" value="AAA57953.1"/>
    <property type="molecule type" value="Genomic_DNA"/>
</dbReference>
<dbReference type="EMBL" id="U00096">
    <property type="protein sequence ID" value="AAC76184.1"/>
    <property type="molecule type" value="Genomic_DNA"/>
</dbReference>
<dbReference type="EMBL" id="AP009048">
    <property type="protein sequence ID" value="BAE77196.1"/>
    <property type="molecule type" value="Genomic_DNA"/>
</dbReference>
<dbReference type="PIR" id="B65105">
    <property type="entry name" value="B65105"/>
</dbReference>
<dbReference type="RefSeq" id="NP_417619.1">
    <property type="nucleotide sequence ID" value="NC_000913.3"/>
</dbReference>
<dbReference type="RefSeq" id="WP_000646033.1">
    <property type="nucleotide sequence ID" value="NZ_STEB01000012.1"/>
</dbReference>
<dbReference type="PDB" id="7A2D">
    <property type="method" value="NMR"/>
    <property type="chains" value="A=20-191"/>
</dbReference>
<dbReference type="PDBsum" id="7A2D"/>
<dbReference type="SMR" id="P64596"/>
<dbReference type="BioGRID" id="4261992">
    <property type="interactions" value="366"/>
</dbReference>
<dbReference type="FunCoup" id="P64596">
    <property type="interactions" value="69"/>
</dbReference>
<dbReference type="IntAct" id="P64596">
    <property type="interactions" value="1"/>
</dbReference>
<dbReference type="STRING" id="511145.b3150"/>
<dbReference type="TCDB" id="8.A.213.1.1">
    <property type="family name" value="the bon domain-containing protein (bon dp) family"/>
</dbReference>
<dbReference type="jPOST" id="P64596"/>
<dbReference type="PaxDb" id="511145-b3150"/>
<dbReference type="EnsemblBacteria" id="AAC76184">
    <property type="protein sequence ID" value="AAC76184"/>
    <property type="gene ID" value="b3150"/>
</dbReference>
<dbReference type="GeneID" id="86861296"/>
<dbReference type="GeneID" id="947659"/>
<dbReference type="KEGG" id="ecj:JW3119"/>
<dbReference type="KEGG" id="eco:b3150"/>
<dbReference type="KEGG" id="ecoc:C3026_17160"/>
<dbReference type="PATRIC" id="fig|1411691.4.peg.3580"/>
<dbReference type="EchoBASE" id="EB2634"/>
<dbReference type="eggNOG" id="COG2823">
    <property type="taxonomic scope" value="Bacteria"/>
</dbReference>
<dbReference type="HOGENOM" id="CLU_083606_3_0_6"/>
<dbReference type="InParanoid" id="P64596"/>
<dbReference type="OMA" id="TSYNRQV"/>
<dbReference type="OrthoDB" id="9783990at2"/>
<dbReference type="PhylomeDB" id="P64596"/>
<dbReference type="BioCyc" id="EcoCyc:G7644-MONOMER"/>
<dbReference type="PRO" id="PR:P64596"/>
<dbReference type="Proteomes" id="UP000000625">
    <property type="component" value="Chromosome"/>
</dbReference>
<dbReference type="GO" id="GO:0032153">
    <property type="term" value="C:cell division site"/>
    <property type="evidence" value="ECO:0000314"/>
    <property type="project" value="EcoCyc"/>
</dbReference>
<dbReference type="GO" id="GO:0009279">
    <property type="term" value="C:cell outer membrane"/>
    <property type="evidence" value="ECO:0000314"/>
    <property type="project" value="EcoCyc"/>
</dbReference>
<dbReference type="Gene3D" id="3.30.1340.30">
    <property type="match status" value="1"/>
</dbReference>
<dbReference type="InterPro" id="IPR007055">
    <property type="entry name" value="BON_dom"/>
</dbReference>
<dbReference type="InterPro" id="IPR051686">
    <property type="entry name" value="Lipoprotein_DolP"/>
</dbReference>
<dbReference type="InterPro" id="IPR014004">
    <property type="entry name" value="Transpt-assoc_nodulatn_dom_bac"/>
</dbReference>
<dbReference type="NCBIfam" id="NF008247">
    <property type="entry name" value="PRK11023.1"/>
    <property type="match status" value="1"/>
</dbReference>
<dbReference type="PANTHER" id="PTHR34606">
    <property type="entry name" value="BON DOMAIN-CONTAINING PROTEIN"/>
    <property type="match status" value="1"/>
</dbReference>
<dbReference type="PANTHER" id="PTHR34606:SF4">
    <property type="entry name" value="OUTER MEMBRANE LIPOPROTEIN DOLP"/>
    <property type="match status" value="1"/>
</dbReference>
<dbReference type="Pfam" id="PF04972">
    <property type="entry name" value="BON"/>
    <property type="match status" value="2"/>
</dbReference>
<dbReference type="SMART" id="SM00749">
    <property type="entry name" value="BON"/>
    <property type="match status" value="2"/>
</dbReference>
<dbReference type="PROSITE" id="PS50914">
    <property type="entry name" value="BON"/>
    <property type="match status" value="2"/>
</dbReference>
<dbReference type="PROSITE" id="PS51257">
    <property type="entry name" value="PROKAR_LIPOPROTEIN"/>
    <property type="match status" value="1"/>
</dbReference>
<name>DOLP_ECOLI</name>
<organism>
    <name type="scientific">Escherichia coli (strain K12)</name>
    <dbReference type="NCBI Taxonomy" id="83333"/>
    <lineage>
        <taxon>Bacteria</taxon>
        <taxon>Pseudomonadati</taxon>
        <taxon>Pseudomonadota</taxon>
        <taxon>Gammaproteobacteria</taxon>
        <taxon>Enterobacterales</taxon>
        <taxon>Enterobacteriaceae</taxon>
        <taxon>Escherichia</taxon>
    </lineage>
</organism>